<feature type="chain" id="PRO_0000223110" description="UPF0328 protein ECU01_0090/ECU01_1520/ECU02_1550/ECU08_0020">
    <location>
        <begin position="1"/>
        <end position="276"/>
    </location>
</feature>
<feature type="region of interest" description="Disordered" evidence="1">
    <location>
        <begin position="1"/>
        <end position="24"/>
    </location>
</feature>
<keyword id="KW-1185">Reference proteome</keyword>
<gene>
    <name type="ordered locus">ECU01_0090</name>
</gene>
<gene>
    <name type="ordered locus">ECU01_1520</name>
</gene>
<gene>
    <name type="ordered locus">ECU02_1550</name>
</gene>
<gene>
    <name type="ordered locus">ECU08_0020</name>
</gene>
<protein>
    <recommendedName>
        <fullName>UPF0328 protein ECU01_0090/ECU01_1520/ECU02_1550/ECU08_0020</fullName>
    </recommendedName>
</protein>
<proteinExistence type="inferred from homology"/>
<name>Y109_ENCCU</name>
<reference key="1">
    <citation type="journal article" date="2001" name="Genome Res.">
        <title>Sequence and analysis of chromosome I of the amitochondriate intracellular parasite Encephalitozoon cuniculi (Microspora).</title>
        <authorList>
            <person name="Peyret P."/>
            <person name="Katinka M.D."/>
            <person name="Duprat S."/>
            <person name="Duffieux F."/>
            <person name="Barbe V."/>
            <person name="Barbazanges M."/>
            <person name="Weissenbach J."/>
            <person name="Saurin W."/>
            <person name="Vivares C.P."/>
        </authorList>
    </citation>
    <scope>NUCLEOTIDE SEQUENCE [LARGE SCALE GENOMIC DNA]</scope>
    <source>
        <strain>GB-M1</strain>
    </source>
</reference>
<reference key="2">
    <citation type="journal article" date="2001" name="Nature">
        <title>Genome sequence and gene compaction of the eukaryote parasite Encephalitozoon cuniculi.</title>
        <authorList>
            <person name="Katinka M.D."/>
            <person name="Duprat S."/>
            <person name="Cornillot E."/>
            <person name="Metenier G."/>
            <person name="Thomarat F."/>
            <person name="Prensier G."/>
            <person name="Barbe V."/>
            <person name="Peyretaillade E."/>
            <person name="Brottier P."/>
            <person name="Wincker P."/>
            <person name="Delbac F."/>
            <person name="El Alaoui H."/>
            <person name="Peyret P."/>
            <person name="Saurin W."/>
            <person name="Gouy M."/>
            <person name="Weissenbach J."/>
            <person name="Vivares C.P."/>
        </authorList>
    </citation>
    <scope>NUCLEOTIDE SEQUENCE [LARGE SCALE GENOMIC DNA]</scope>
    <source>
        <strain>GB-M1</strain>
    </source>
</reference>
<accession>Q8ST67</accession>
<comment type="similarity">
    <text evidence="2">Belongs to the UPF0328 family.</text>
</comment>
<evidence type="ECO:0000256" key="1">
    <source>
        <dbReference type="SAM" id="MobiDB-lite"/>
    </source>
</evidence>
<evidence type="ECO:0000305" key="2"/>
<organism>
    <name type="scientific">Encephalitozoon cuniculi (strain GB-M1)</name>
    <name type="common">Microsporidian parasite</name>
    <dbReference type="NCBI Taxonomy" id="284813"/>
    <lineage>
        <taxon>Eukaryota</taxon>
        <taxon>Fungi</taxon>
        <taxon>Fungi incertae sedis</taxon>
        <taxon>Microsporidia</taxon>
        <taxon>Unikaryonidae</taxon>
        <taxon>Encephalitozoon</taxon>
    </lineage>
</organism>
<sequence length="276" mass="30327">MGIIDVQRSHLTATPSKERDAPAHPPPTILPVCILFPYTSIALPVLMYYIPEKGQFDQNPFLKLIAILPPCLYSAVQFPLLFLGNPESSCTPRPALYATLYLLLDASLLAFSAISILSIAAFTTTEWNSDEVVAVCSTLLPSLLVLPAHLLSTSCALTPGSIGFTDSSVDILIDLLMVSLLAAGLTLNVDESWRFFPYICISSLVLVLAKLLRKSSSMPRRDPAPAPAWRIAAFVLIFGLSMFVYFSILYECLLIFGNHFPWFPSQAPSNDLTNKW</sequence>
<dbReference type="EMBL" id="AL391737">
    <property type="protein sequence ID" value="CAD24881.1"/>
    <property type="molecule type" value="Genomic_DNA"/>
</dbReference>
<dbReference type="EMBL" id="AL391737">
    <property type="protein sequence ID" value="CAD25023.1"/>
    <property type="molecule type" value="Genomic_DNA"/>
</dbReference>
<dbReference type="EMBL" id="AL590442">
    <property type="protein sequence ID" value="CAD25184.1"/>
    <property type="molecule type" value="Genomic_DNA"/>
</dbReference>
<dbReference type="EMBL" id="AL590448">
    <property type="protein sequence ID" value="CAD26307.1"/>
    <property type="molecule type" value="Genomic_DNA"/>
</dbReference>
<dbReference type="RefSeq" id="NP_001402097.1">
    <property type="nucleotide sequence ID" value="NM_001415629.1"/>
</dbReference>
<dbReference type="RefSeq" id="NP_584680.1">
    <property type="nucleotide sequence ID" value="NM_001040869.1"/>
</dbReference>
<dbReference type="RefSeq" id="NP_597131.1">
    <property type="nucleotide sequence ID" value="NM_001041740.1"/>
</dbReference>
<dbReference type="RefSeq" id="XP_965846.1">
    <property type="nucleotide sequence ID" value="XM_960753.1"/>
</dbReference>
<dbReference type="RefSeq" id="XP_965988.1">
    <property type="nucleotide sequence ID" value="XM_960895.1"/>
</dbReference>
<dbReference type="GeneID" id="858670"/>
<dbReference type="GeneID" id="859553"/>
<dbReference type="GeneID" id="860182"/>
<dbReference type="KEGG" id="ecu:ECU02_1550"/>
<dbReference type="KEGG" id="ecu:ECU08_0020"/>
<dbReference type="VEuPathDB" id="MicrosporidiaDB:ECU01_0090"/>
<dbReference type="VEuPathDB" id="MicrosporidiaDB:ECU01_1520"/>
<dbReference type="VEuPathDB" id="MicrosporidiaDB:ECU02_1550"/>
<dbReference type="VEuPathDB" id="MicrosporidiaDB:ECU08_0020"/>
<dbReference type="HOGENOM" id="CLU_059413_0_0_1"/>
<dbReference type="InParanoid" id="Q8ST67"/>
<dbReference type="Proteomes" id="UP000000819">
    <property type="component" value="Chromosome I"/>
</dbReference>
<dbReference type="Proteomes" id="UP000000819">
    <property type="component" value="Chromosome II"/>
</dbReference>
<dbReference type="Proteomes" id="UP000000819">
    <property type="component" value="Chromosome VIII"/>
</dbReference>
<dbReference type="InterPro" id="IPR019081">
    <property type="entry name" value="UPF0328"/>
</dbReference>
<dbReference type="Pfam" id="PF09591">
    <property type="entry name" value="DUF2463"/>
    <property type="match status" value="1"/>
</dbReference>